<comment type="function">
    <text evidence="3 4 5">Alpha toxins bind voltage-independently at site-3 of sodium channels and inhibit the inactivation of the activated channels. The toxin affect mammalian sodium channels Nav1.7/SCN9A (EC(50)=4.5 nM), Nav1.4/SCN4A (EC(50)=9.6 nM), Nav1.6/SCN8A (EC(50)=30 nM), Nav1.5/SCN5A (only at micromolar concentrations), and insect sodium channel para/tipE (EC(50)=80 nM) (PubMed:16038905, PubMed:16641312, PubMed:23527544). In vivo, intraplantar administration of this toxin elicits pain behaviors, including licking and flinching of the hind paw (PubMed:26999206).</text>
</comment>
<comment type="subcellular location">
    <subcellularLocation>
        <location evidence="3">Secreted</location>
    </subcellularLocation>
</comment>
<comment type="tissue specificity">
    <text evidence="3">Expressed by the venom gland.</text>
</comment>
<comment type="domain">
    <text evidence="8">Has the structural arrangement of an alpha-helix connected to antiparallel beta-sheets by disulfide bonds (CS-alpha/beta).</text>
</comment>
<comment type="mass spectrometry" mass="7204.8" method="MALDI" evidence="3">
    <text>With amidation.</text>
</comment>
<comment type="biotechnology">
    <text evidence="6">Intraplantal administration of this protein is used as a pharmacological tool to establish a Nav1.7/SCN9A-mediated mouse model of pain.</text>
</comment>
<comment type="miscellaneous">
    <text evidence="3 4">Negative results: has no effect on mammalian sodium channels Nav1.2/SCN2A, Nav1.3/SCN3A, and Nav1.8/SCN10A (PubMed:16038905, PubMed:16641312).</text>
</comment>
<comment type="similarity">
    <text evidence="1">Belongs to the long (4 C-C) scorpion toxin superfamily. Sodium channel inhibitor family. Alpha subfamily.</text>
</comment>
<protein>
    <recommendedName>
        <fullName evidence="7">Alpha-toxin OD1</fullName>
    </recommendedName>
</protein>
<keyword id="KW-0002">3D-structure</keyword>
<keyword id="KW-0027">Amidation</keyword>
<keyword id="KW-0903">Direct protein sequencing</keyword>
<keyword id="KW-1015">Disulfide bond</keyword>
<keyword id="KW-0872">Ion channel impairing toxin</keyword>
<keyword id="KW-0528">Neurotoxin</keyword>
<keyword id="KW-0964">Secreted</keyword>
<keyword id="KW-0800">Toxin</keyword>
<keyword id="KW-0738">Voltage-gated sodium channel impairing toxin</keyword>
<organism>
    <name type="scientific">Odontobuthus doriae</name>
    <name type="common">Yellow Iranian scorpion</name>
    <dbReference type="NCBI Taxonomy" id="342590"/>
    <lineage>
        <taxon>Eukaryota</taxon>
        <taxon>Metazoa</taxon>
        <taxon>Ecdysozoa</taxon>
        <taxon>Arthropoda</taxon>
        <taxon>Chelicerata</taxon>
        <taxon>Arachnida</taxon>
        <taxon>Scorpiones</taxon>
        <taxon>Buthida</taxon>
        <taxon>Buthoidea</taxon>
        <taxon>Buthidae</taxon>
        <taxon>Odontobuthus</taxon>
    </lineage>
</organism>
<feature type="chain" id="PRO_0000066788" description="Alpha-toxin OD1" evidence="3">
    <location>
        <begin position="1"/>
        <end position="65"/>
    </location>
</feature>
<feature type="domain" description="LCN-type CS-alpha/beta" evidence="2">
    <location>
        <begin position="3"/>
        <end position="65"/>
    </location>
</feature>
<feature type="short sequence motif" description="Important for toxin selectivity for individual Nav channel subtype (Nav1.6/SCN8A and Nav1.7/SCN9A), but not for toxin potency" evidence="5">
    <location>
        <begin position="9"/>
        <end position="11"/>
    </location>
</feature>
<feature type="site" description="Important for toxin potency but not for selectivity for individual Nav channel subtype (Nav1.6/SCN8A and Nav1.7/SCN9A)" evidence="5">
    <location>
        <position position="6"/>
    </location>
</feature>
<feature type="modified residue" description="Arginine amide" evidence="3">
    <location>
        <position position="65"/>
    </location>
</feature>
<feature type="disulfide bond" evidence="2 5 9">
    <location>
        <begin position="13"/>
        <end position="64"/>
    </location>
</feature>
<feature type="disulfide bond" evidence="2 5 9">
    <location>
        <begin position="17"/>
        <end position="37"/>
    </location>
</feature>
<feature type="disulfide bond" evidence="2 5 9">
    <location>
        <begin position="23"/>
        <end position="47"/>
    </location>
</feature>
<feature type="disulfide bond" evidence="2 5 9">
    <location>
        <begin position="27"/>
        <end position="49"/>
    </location>
</feature>
<feature type="mutagenesis site" description="Decrease in potency for Nav1.4/SCN4A (17-fold), Nav1.6/SCN8A (8-fold), and Nav1.7/SCN9A (17-fold)." evidence="5">
    <original>Y</original>
    <variation>F</variation>
    <location>
        <position position="6"/>
    </location>
</feature>
<feature type="mutagenesis site" description="Increase in potency for Nav1.4/SCN4A (1.6-fold) and Nav1.7/SCN9A (2.3-fold) and decrease in potency for Nav1.6/SCN8A (3-fold), resulting in a 40-fold increase of selectivity for Nav1.7/SCN9A over Nav1.6/SCN8A. No change in potency for Nav1.4/SCN4A and Nav1.6/SCN8A, and important increase in potency for Nav1.7/SCN9A (11.7-fold); when associated with A-55." evidence="5">
    <original>DDK</original>
    <variation>KPH</variation>
    <location>
        <begin position="9"/>
        <end position="11"/>
    </location>
</feature>
<feature type="mutagenesis site" description="Increase in potency for Nav1.4/SCN4A (5-fold) and Nav1.6/SCN8A (7.8-fold) and decrease in potency for Nav1.7/SCN9A (4.3-fold), resulting in a 5-fold increase of selectivity for Nav1.6/SCN8A over Nav1.7/SCN9A. Increase in potency for Nav1.6/SCN8A (16-fold), no change in potency for Nav1.7/SCN9A, and decrease in potency for Nav1.4/SCN4A (1.6-fold); when associated with A-55." evidence="5">
    <original>K</original>
    <variation>V</variation>
    <location>
        <position position="11"/>
    </location>
</feature>
<feature type="mutagenesis site" description="No change in potency for Nav1.4/SCN4A, Nav1.6/SCN8A and Nav1.7/SCN9A." evidence="5">
    <original>K</original>
    <variation>A</variation>
    <location>
        <position position="51"/>
    </location>
</feature>
<feature type="mutagenesis site" description="No change in potency for Nav1.4/SCN4A and Nav1.7/SCN9A, and important decrease in potency for Nav1.6/SCN8A (2.3-fold), resulting in a 13-fold increase of selectivity for Nav1.4/SCN4A and Nav1.7/SCN9A over Nav1.6/SCN8A. No change in potency for Nav1.4/SCN4A; Nav1.6/SCN8A, and important increase in potency for Nav1.7/SCN9A (11.7-fold); when associated with 9-K--H-11. Increase in potency for Nav1.6/SCN8A (16-fold), no change in potency for Nav1.7/SCN9A, and decrease in potency for Nav1.4/SCN4A (1.6-fold); when associated with V-11." evidence="5">
    <original>E</original>
    <variation>A</variation>
    <location>
        <position position="55"/>
    </location>
</feature>
<feature type="mutagenesis site" description="No change in potency for Nav1.4/SCN4A and Nav1.7/SCN9A, and decrease in potency for Nav1.6/SCN8A (1.7-fold)." evidence="5">
    <original>E</original>
    <variation>H</variation>
    <location>
        <position position="55"/>
    </location>
</feature>
<feature type="mutagenesis site" description="No change in potency for Nav1.4/SCN4A, and decrease in potency for Nav1.6/SCN8A (1.6-fold) and Nav1.7/SCN9A (2.6-fold)." evidence="5">
    <original>I</original>
    <variation>G</variation>
    <location>
        <position position="60"/>
    </location>
</feature>
<feature type="strand" evidence="10">
    <location>
        <begin position="2"/>
        <end position="8"/>
    </location>
</feature>
<feature type="helix" evidence="10">
    <location>
        <begin position="20"/>
        <end position="29"/>
    </location>
</feature>
<feature type="strand" evidence="10">
    <location>
        <begin position="33"/>
        <end position="39"/>
    </location>
</feature>
<feature type="helix" evidence="10">
    <location>
        <begin position="41"/>
        <end position="43"/>
    </location>
</feature>
<feature type="strand" evidence="10">
    <location>
        <begin position="45"/>
        <end position="53"/>
    </location>
</feature>
<sequence length="65" mass="7215">GVRDAYIADDKNCVYTCASNGYCNTECTKNGAESGYCQWIGRYGNACWCIKLPDEVPIRIPGKCR</sequence>
<proteinExistence type="evidence at protein level"/>
<accession>P84646</accession>
<reference key="1">
    <citation type="journal article" date="2005" name="FEBS Lett.">
        <title>OD1, the first toxin isolated from the venom of the scorpion Odonthobuthus doriae active on voltage-gated Na+ channels.</title>
        <authorList>
            <person name="Jalali A."/>
            <person name="Bosmans F."/>
            <person name="Amininasab M."/>
            <person name="Clynen E."/>
            <person name="Cuypers E."/>
            <person name="Zaremirakabadi A."/>
            <person name="Sarbolouki M.N."/>
            <person name="Schoofs L."/>
            <person name="Vatanpour H."/>
            <person name="Tytgat J."/>
        </authorList>
    </citation>
    <scope>PROTEIN SEQUENCE</scope>
    <scope>FUNCTION</scope>
    <scope>SUBCELLULAR LOCATION</scope>
    <scope>MASS SPECTROMETRY</scope>
    <scope>AMIDATION AT ARG-65</scope>
    <source>
        <tissue>Venom</tissue>
    </source>
</reference>
<reference key="2">
    <citation type="journal article" date="2006" name="Mol. Pharmacol.">
        <title>Potent modulation of the voltage-gated sodium channel Nav1.7 by OD1, a toxin from the scorpion Odonthobuthus doriae.</title>
        <authorList>
            <person name="Maertens C."/>
            <person name="Cuypers E."/>
            <person name="Amininasab M."/>
            <person name="Jalali A."/>
            <person name="Vatanpour H."/>
            <person name="Tytgat J."/>
        </authorList>
    </citation>
    <scope>FUNCTION</scope>
</reference>
<reference key="3">
    <citation type="journal article" date="2016" name="Toxins">
        <title>Analgesic effects of GpTx-1, PF-04856264 and CNV1014802 in a mouse model of Nav1.7-mediated pain.</title>
        <authorList>
            <person name="Deuis J.R."/>
            <person name="Wingerd J.S."/>
            <person name="Winter Z."/>
            <person name="Durek T."/>
            <person name="Dekan Z."/>
            <person name="Sousa S.R."/>
            <person name="Zimmermann K."/>
            <person name="Hoffmann T."/>
            <person name="Weidner C."/>
            <person name="Nassar M.A."/>
            <person name="Alewood P.F."/>
            <person name="Lewis R.J."/>
            <person name="Vetter I."/>
        </authorList>
    </citation>
    <scope>FUNCTION</scope>
    <scope>MODEL OF NAV1.7/SCN9A-MEDIATED PAIN</scope>
</reference>
<reference key="4">
    <citation type="journal article" date="2013" name="ACS Chem. Biol.">
        <title>Chemical engineering and structural and pharmacological characterization of the alpha-scorpion toxin OD1.</title>
        <authorList>
            <person name="Durek T."/>
            <person name="Vetter I."/>
            <person name="Wang C.I."/>
            <person name="Motin L."/>
            <person name="Knapp O."/>
            <person name="Adams D.J."/>
            <person name="Lewis R.J."/>
            <person name="Alewood P.F."/>
        </authorList>
    </citation>
    <scope>X-RAY CRYSTALLOGRAPHY (1.8 ANGSTROMS)</scope>
    <scope>SYNTHESIS</scope>
    <scope>FUNCTION</scope>
    <scope>DISULFIDE BONDS</scope>
    <scope>MUTAGENESIS OF TYR-6; 9-ASP--LYS-11; LYS-11; LYS-51; GLU-55 AND ILE-60</scope>
</reference>
<name>SCX1_ODODO</name>
<dbReference type="PDB" id="4HHF">
    <property type="method" value="X-ray"/>
    <property type="resolution" value="1.80 A"/>
    <property type="chains" value="A=1-65"/>
</dbReference>
<dbReference type="PDBsum" id="4HHF"/>
<dbReference type="SMR" id="P84646"/>
<dbReference type="EvolutionaryTrace" id="P84646"/>
<dbReference type="GO" id="GO:0005576">
    <property type="term" value="C:extracellular region"/>
    <property type="evidence" value="ECO:0000314"/>
    <property type="project" value="UniProtKB"/>
</dbReference>
<dbReference type="GO" id="GO:0019871">
    <property type="term" value="F:sodium channel inhibitor activity"/>
    <property type="evidence" value="ECO:0000314"/>
    <property type="project" value="UniProtKB"/>
</dbReference>
<dbReference type="GO" id="GO:0090729">
    <property type="term" value="F:toxin activity"/>
    <property type="evidence" value="ECO:0007669"/>
    <property type="project" value="UniProtKB-KW"/>
</dbReference>
<dbReference type="GO" id="GO:0006952">
    <property type="term" value="P:defense response"/>
    <property type="evidence" value="ECO:0007669"/>
    <property type="project" value="InterPro"/>
</dbReference>
<dbReference type="CDD" id="cd23106">
    <property type="entry name" value="neurotoxins_LC_scorpion"/>
    <property type="match status" value="1"/>
</dbReference>
<dbReference type="FunFam" id="3.30.30.10:FF:000002">
    <property type="entry name" value="Alpha-like toxin BmK-M1"/>
    <property type="match status" value="1"/>
</dbReference>
<dbReference type="Gene3D" id="3.30.30.10">
    <property type="entry name" value="Knottin, scorpion toxin-like"/>
    <property type="match status" value="1"/>
</dbReference>
<dbReference type="InterPro" id="IPR044062">
    <property type="entry name" value="LCN-type_CS_alpha_beta_dom"/>
</dbReference>
<dbReference type="InterPro" id="IPR003614">
    <property type="entry name" value="Scorpion_toxin-like"/>
</dbReference>
<dbReference type="InterPro" id="IPR036574">
    <property type="entry name" value="Scorpion_toxin-like_sf"/>
</dbReference>
<dbReference type="InterPro" id="IPR018218">
    <property type="entry name" value="Scorpion_toxinL"/>
</dbReference>
<dbReference type="InterPro" id="IPR002061">
    <property type="entry name" value="Scorpion_toxinL/defensin"/>
</dbReference>
<dbReference type="Pfam" id="PF00537">
    <property type="entry name" value="Toxin_3"/>
    <property type="match status" value="1"/>
</dbReference>
<dbReference type="PRINTS" id="PR00285">
    <property type="entry name" value="SCORPNTOXIN"/>
</dbReference>
<dbReference type="PRINTS" id="PR00284">
    <property type="entry name" value="TOXIN"/>
</dbReference>
<dbReference type="SMART" id="SM00505">
    <property type="entry name" value="Knot1"/>
    <property type="match status" value="1"/>
</dbReference>
<dbReference type="SUPFAM" id="SSF57095">
    <property type="entry name" value="Scorpion toxin-like"/>
    <property type="match status" value="1"/>
</dbReference>
<dbReference type="PROSITE" id="PS51863">
    <property type="entry name" value="LCN_CSAB"/>
    <property type="match status" value="1"/>
</dbReference>
<evidence type="ECO:0000255" key="1"/>
<evidence type="ECO:0000255" key="2">
    <source>
        <dbReference type="PROSITE-ProRule" id="PRU01210"/>
    </source>
</evidence>
<evidence type="ECO:0000269" key="3">
    <source>
    </source>
</evidence>
<evidence type="ECO:0000269" key="4">
    <source>
    </source>
</evidence>
<evidence type="ECO:0000269" key="5">
    <source>
    </source>
</evidence>
<evidence type="ECO:0000269" key="6">
    <source>
    </source>
</evidence>
<evidence type="ECO:0000303" key="7">
    <source>
    </source>
</evidence>
<evidence type="ECO:0000305" key="8"/>
<evidence type="ECO:0000312" key="9">
    <source>
        <dbReference type="PDB" id="4HHF"/>
    </source>
</evidence>
<evidence type="ECO:0007829" key="10">
    <source>
        <dbReference type="PDB" id="4HHF"/>
    </source>
</evidence>